<dbReference type="EC" id="5.4.2.11" evidence="2"/>
<dbReference type="EMBL" id="AE005674">
    <property type="protein sequence ID" value="AAN42193.2"/>
    <property type="molecule type" value="Genomic_DNA"/>
</dbReference>
<dbReference type="EMBL" id="AE014073">
    <property type="protein sequence ID" value="AAP16066.1"/>
    <property type="molecule type" value="Genomic_DNA"/>
</dbReference>
<dbReference type="RefSeq" id="NP_706486.2">
    <property type="nucleotide sequence ID" value="NC_004337.2"/>
</dbReference>
<dbReference type="RefSeq" id="WP_001295305.1">
    <property type="nucleotide sequence ID" value="NZ_WPGW01000046.1"/>
</dbReference>
<dbReference type="SMR" id="P62710"/>
<dbReference type="STRING" id="198214.SF0549"/>
<dbReference type="PaxDb" id="198214-SF0549"/>
<dbReference type="GeneID" id="1023473"/>
<dbReference type="GeneID" id="93776726"/>
<dbReference type="KEGG" id="sfl:SF0549"/>
<dbReference type="KEGG" id="sfx:S0557"/>
<dbReference type="PATRIC" id="fig|198214.7.peg.638"/>
<dbReference type="HOGENOM" id="CLU_033323_1_1_6"/>
<dbReference type="UniPathway" id="UPA00109">
    <property type="reaction ID" value="UER00186"/>
</dbReference>
<dbReference type="Proteomes" id="UP000001006">
    <property type="component" value="Chromosome"/>
</dbReference>
<dbReference type="Proteomes" id="UP000002673">
    <property type="component" value="Chromosome"/>
</dbReference>
<dbReference type="GO" id="GO:0004619">
    <property type="term" value="F:phosphoglycerate mutase activity"/>
    <property type="evidence" value="ECO:0007669"/>
    <property type="project" value="UniProtKB-EC"/>
</dbReference>
<dbReference type="GO" id="GO:0006094">
    <property type="term" value="P:gluconeogenesis"/>
    <property type="evidence" value="ECO:0007669"/>
    <property type="project" value="UniProtKB-UniRule"/>
</dbReference>
<dbReference type="GO" id="GO:0006096">
    <property type="term" value="P:glycolytic process"/>
    <property type="evidence" value="ECO:0007669"/>
    <property type="project" value="UniProtKB-UniRule"/>
</dbReference>
<dbReference type="CDD" id="cd07067">
    <property type="entry name" value="HP_PGM_like"/>
    <property type="match status" value="1"/>
</dbReference>
<dbReference type="FunFam" id="3.40.50.1240:FF:000003">
    <property type="entry name" value="2,3-bisphosphoglycerate-dependent phosphoglycerate mutase"/>
    <property type="match status" value="1"/>
</dbReference>
<dbReference type="Gene3D" id="3.40.50.1240">
    <property type="entry name" value="Phosphoglycerate mutase-like"/>
    <property type="match status" value="1"/>
</dbReference>
<dbReference type="HAMAP" id="MF_01039">
    <property type="entry name" value="PGAM_GpmA"/>
    <property type="match status" value="1"/>
</dbReference>
<dbReference type="InterPro" id="IPR013078">
    <property type="entry name" value="His_Pase_superF_clade-1"/>
</dbReference>
<dbReference type="InterPro" id="IPR029033">
    <property type="entry name" value="His_PPase_superfam"/>
</dbReference>
<dbReference type="InterPro" id="IPR001345">
    <property type="entry name" value="PG/BPGM_mutase_AS"/>
</dbReference>
<dbReference type="InterPro" id="IPR005952">
    <property type="entry name" value="Phosphogly_mut1"/>
</dbReference>
<dbReference type="NCBIfam" id="TIGR01258">
    <property type="entry name" value="pgm_1"/>
    <property type="match status" value="1"/>
</dbReference>
<dbReference type="NCBIfam" id="NF010713">
    <property type="entry name" value="PRK14115.1"/>
    <property type="match status" value="1"/>
</dbReference>
<dbReference type="PANTHER" id="PTHR11931">
    <property type="entry name" value="PHOSPHOGLYCERATE MUTASE"/>
    <property type="match status" value="1"/>
</dbReference>
<dbReference type="Pfam" id="PF00300">
    <property type="entry name" value="His_Phos_1"/>
    <property type="match status" value="1"/>
</dbReference>
<dbReference type="PIRSF" id="PIRSF000709">
    <property type="entry name" value="6PFK_2-Ptase"/>
    <property type="match status" value="1"/>
</dbReference>
<dbReference type="SMART" id="SM00855">
    <property type="entry name" value="PGAM"/>
    <property type="match status" value="1"/>
</dbReference>
<dbReference type="SUPFAM" id="SSF53254">
    <property type="entry name" value="Phosphoglycerate mutase-like"/>
    <property type="match status" value="1"/>
</dbReference>
<dbReference type="PROSITE" id="PS00175">
    <property type="entry name" value="PG_MUTASE"/>
    <property type="match status" value="1"/>
</dbReference>
<organism>
    <name type="scientific">Shigella flexneri</name>
    <dbReference type="NCBI Taxonomy" id="623"/>
    <lineage>
        <taxon>Bacteria</taxon>
        <taxon>Pseudomonadati</taxon>
        <taxon>Pseudomonadota</taxon>
        <taxon>Gammaproteobacteria</taxon>
        <taxon>Enterobacterales</taxon>
        <taxon>Enterobacteriaceae</taxon>
        <taxon>Shigella</taxon>
    </lineage>
</organism>
<keyword id="KW-0312">Gluconeogenesis</keyword>
<keyword id="KW-0324">Glycolysis</keyword>
<keyword id="KW-0413">Isomerase</keyword>
<keyword id="KW-1185">Reference proteome</keyword>
<sequence>MAVTKLVLVRHGESQWNKENRFTGWYDVDLSEKGVSEAKAAGKLLKEEGYSFDFAYTSVLKRAIHTLWNVLDELDQAWLPVEKSWKLNERHYGALQGLNKAETAEKYGDEQVKQWRRGFAVTPPELTKDDERYPGHDPRYAKLSEKELPLTESLALTIDRVIPYWNETILPRMKSGERVIIAAHGNSLRALVKYLDNMSEEEILELNIPTGVPLVYEFDENFKPLKRYYLGNADEIAAKAAAVANQGKAK</sequence>
<accession>P62710</accession>
<accession>P31217</accession>
<protein>
    <recommendedName>
        <fullName evidence="2">2,3-bisphosphoglycerate-dependent phosphoglycerate mutase</fullName>
        <shortName evidence="2">BPG-dependent PGAM</shortName>
        <shortName evidence="2">PGAM</shortName>
        <shortName evidence="2">Phosphoglyceromutase</shortName>
        <shortName evidence="2">dPGM</shortName>
        <ecNumber evidence="2">5.4.2.11</ecNumber>
    </recommendedName>
</protein>
<evidence type="ECO:0000250" key="1"/>
<evidence type="ECO:0000255" key="2">
    <source>
        <dbReference type="HAMAP-Rule" id="MF_01039"/>
    </source>
</evidence>
<comment type="function">
    <text evidence="2">Catalyzes the interconversion of 2-phosphoglycerate and 3-phosphoglycerate.</text>
</comment>
<comment type="catalytic activity">
    <reaction evidence="2">
        <text>(2R)-2-phosphoglycerate = (2R)-3-phosphoglycerate</text>
        <dbReference type="Rhea" id="RHEA:15901"/>
        <dbReference type="ChEBI" id="CHEBI:58272"/>
        <dbReference type="ChEBI" id="CHEBI:58289"/>
        <dbReference type="EC" id="5.4.2.11"/>
    </reaction>
</comment>
<comment type="pathway">
    <text evidence="2">Carbohydrate degradation; glycolysis; pyruvate from D-glyceraldehyde 3-phosphate: step 3/5.</text>
</comment>
<comment type="subunit">
    <text evidence="2">Homodimer.</text>
</comment>
<comment type="similarity">
    <text evidence="2">Belongs to the phosphoglycerate mutase family. BPG-dependent PGAM subfamily.</text>
</comment>
<name>GPMA_SHIFL</name>
<reference key="1">
    <citation type="journal article" date="2002" name="Nucleic Acids Res.">
        <title>Genome sequence of Shigella flexneri 2a: insights into pathogenicity through comparison with genomes of Escherichia coli K12 and O157.</title>
        <authorList>
            <person name="Jin Q."/>
            <person name="Yuan Z."/>
            <person name="Xu J."/>
            <person name="Wang Y."/>
            <person name="Shen Y."/>
            <person name="Lu W."/>
            <person name="Wang J."/>
            <person name="Liu H."/>
            <person name="Yang J."/>
            <person name="Yang F."/>
            <person name="Zhang X."/>
            <person name="Zhang J."/>
            <person name="Yang G."/>
            <person name="Wu H."/>
            <person name="Qu D."/>
            <person name="Dong J."/>
            <person name="Sun L."/>
            <person name="Xue Y."/>
            <person name="Zhao A."/>
            <person name="Gao Y."/>
            <person name="Zhu J."/>
            <person name="Kan B."/>
            <person name="Ding K."/>
            <person name="Chen S."/>
            <person name="Cheng H."/>
            <person name="Yao Z."/>
            <person name="He B."/>
            <person name="Chen R."/>
            <person name="Ma D."/>
            <person name="Qiang B."/>
            <person name="Wen Y."/>
            <person name="Hou Y."/>
            <person name="Yu J."/>
        </authorList>
    </citation>
    <scope>NUCLEOTIDE SEQUENCE [LARGE SCALE GENOMIC DNA]</scope>
    <source>
        <strain>301 / Serotype 2a</strain>
    </source>
</reference>
<reference key="2">
    <citation type="journal article" date="2003" name="Infect. Immun.">
        <title>Complete genome sequence and comparative genomics of Shigella flexneri serotype 2a strain 2457T.</title>
        <authorList>
            <person name="Wei J."/>
            <person name="Goldberg M.B."/>
            <person name="Burland V."/>
            <person name="Venkatesan M.M."/>
            <person name="Deng W."/>
            <person name="Fournier G."/>
            <person name="Mayhew G.F."/>
            <person name="Plunkett G. III"/>
            <person name="Rose D.J."/>
            <person name="Darling A."/>
            <person name="Mau B."/>
            <person name="Perna N.T."/>
            <person name="Payne S.M."/>
            <person name="Runyen-Janecky L.J."/>
            <person name="Zhou S."/>
            <person name="Schwartz D.C."/>
            <person name="Blattner F.R."/>
        </authorList>
    </citation>
    <scope>NUCLEOTIDE SEQUENCE [LARGE SCALE GENOMIC DNA]</scope>
    <source>
        <strain>ATCC 700930 / 2457T / Serotype 2a</strain>
    </source>
</reference>
<feature type="initiator methionine" description="Removed" evidence="1">
    <location>
        <position position="1"/>
    </location>
</feature>
<feature type="chain" id="PRO_0000179909" description="2,3-bisphosphoglycerate-dependent phosphoglycerate mutase">
    <location>
        <begin position="2"/>
        <end position="250"/>
    </location>
</feature>
<feature type="active site" description="Tele-phosphohistidine intermediate" evidence="2">
    <location>
        <position position="11"/>
    </location>
</feature>
<feature type="active site" description="Proton donor/acceptor" evidence="2">
    <location>
        <position position="89"/>
    </location>
</feature>
<feature type="binding site" evidence="2">
    <location>
        <begin position="10"/>
        <end position="17"/>
    </location>
    <ligand>
        <name>substrate</name>
    </ligand>
</feature>
<feature type="binding site" evidence="2">
    <location>
        <begin position="23"/>
        <end position="24"/>
    </location>
    <ligand>
        <name>substrate</name>
    </ligand>
</feature>
<feature type="binding site" evidence="2">
    <location>
        <position position="62"/>
    </location>
    <ligand>
        <name>substrate</name>
    </ligand>
</feature>
<feature type="binding site" evidence="2">
    <location>
        <begin position="89"/>
        <end position="92"/>
    </location>
    <ligand>
        <name>substrate</name>
    </ligand>
</feature>
<feature type="binding site" evidence="2">
    <location>
        <position position="100"/>
    </location>
    <ligand>
        <name>substrate</name>
    </ligand>
</feature>
<feature type="binding site" evidence="2">
    <location>
        <begin position="116"/>
        <end position="117"/>
    </location>
    <ligand>
        <name>substrate</name>
    </ligand>
</feature>
<feature type="binding site" evidence="2">
    <location>
        <begin position="185"/>
        <end position="186"/>
    </location>
    <ligand>
        <name>substrate</name>
    </ligand>
</feature>
<feature type="site" description="Transition state stabilizer" evidence="2">
    <location>
        <position position="184"/>
    </location>
</feature>
<gene>
    <name evidence="2" type="primary">gpmA</name>
    <name type="synonym">gpm</name>
    <name type="synonym">pgm</name>
    <name type="synonym">pgmA</name>
    <name type="ordered locus">SF0549</name>
    <name type="ordered locus">S0557</name>
</gene>
<proteinExistence type="inferred from homology"/>